<sequence>MALLISCGEVTSSQFTVFRLLNQSLDFVSDNVSRLLAPIFTNLRDFEMRLSCIERPPSISGNHSHLCTEKWFSDQKDYDQKEDPEAIFNVLDYILKSSLDRLASLRESVCQTKSFDYDDCLSIHSSIMRDLCLQGKLDAALWLRKKMIYSGVIPGLITHNHLLNGLCKAGYIEKADGLVREMREMGPSPNCVSYNTLIKGLCSVNNVDKALYLFNTMNKYGIRPNRVTCNIIVHALCQKGVIGNNNKKLLEEILDSSQANAPLDIVICTILMDSCFKNGNVVQALEVWKEMSQKNVPADSVVYNVIIRGLCSSGNMVAAYGFMCDMVKRGVNPDVFTYNTLISALCKEGKFDEACDLHGTMQNGGVAPDQISYKVIIQGLCIHGDVNRANEFLLSMLKSSLLPEVLLWNVVIDGYGRYGDTSSALSVLNLMLSYGVKPNVYTNNALIHGYVKGGRLIDAWWVKNEMRSTKIHPDTTTYNLLLGAACTLGHLRLAFQLYDEMLRRGCQPDIITYTELVRGLCWKGRLKKAESLLSRIQATGITIDHVPFLILAKKYTRLQRPGEAYLVYKKWLATRNRGVSCPSILNHMHTEEQ</sequence>
<feature type="chain" id="PRO_0000363533" description="Pentatricopeptide repeat-containing protein At5g24830">
    <location>
        <begin position="1"/>
        <end position="593"/>
    </location>
</feature>
<feature type="repeat" description="PPR 1">
    <location>
        <begin position="120"/>
        <end position="154"/>
    </location>
</feature>
<feature type="repeat" description="PPR 2">
    <location>
        <begin position="155"/>
        <end position="189"/>
    </location>
</feature>
<feature type="repeat" description="PPR 3">
    <location>
        <begin position="190"/>
        <end position="224"/>
    </location>
</feature>
<feature type="repeat" description="PPR 4">
    <location>
        <begin position="225"/>
        <end position="256"/>
    </location>
</feature>
<feature type="repeat" description="PPR 5">
    <location>
        <begin position="264"/>
        <end position="298"/>
    </location>
</feature>
<feature type="repeat" description="PPR 6">
    <location>
        <begin position="299"/>
        <end position="333"/>
    </location>
</feature>
<feature type="repeat" description="PPR 7">
    <location>
        <begin position="334"/>
        <end position="368"/>
    </location>
</feature>
<feature type="repeat" description="PPR 8">
    <location>
        <begin position="369"/>
        <end position="403"/>
    </location>
</feature>
<feature type="repeat" description="PPR 9">
    <location>
        <begin position="404"/>
        <end position="438"/>
    </location>
</feature>
<feature type="repeat" description="PPR 10">
    <location>
        <begin position="439"/>
        <end position="473"/>
    </location>
</feature>
<feature type="repeat" description="PPR 11">
    <location>
        <begin position="474"/>
        <end position="508"/>
    </location>
</feature>
<feature type="repeat" description="PPR 12">
    <location>
        <begin position="509"/>
        <end position="543"/>
    </location>
</feature>
<feature type="sequence conflict" description="In Ref. 3; BAC41999." evidence="1" ref="3">
    <original>F</original>
    <variation>L</variation>
    <location>
        <position position="46"/>
    </location>
</feature>
<feature type="sequence conflict" description="In Ref. 3; BAC41999." evidence="1" ref="3">
    <original>T</original>
    <variation>A</variation>
    <location>
        <position position="112"/>
    </location>
</feature>
<comment type="similarity">
    <text evidence="1">Belongs to the PPR family. P subfamily.</text>
</comment>
<comment type="online information" name="Pentatricopeptide repeat proteins">
    <link uri="https://ppr.plantenergy.uwa.edu.au"/>
</comment>
<name>PP396_ARATH</name>
<evidence type="ECO:0000305" key="1"/>
<protein>
    <recommendedName>
        <fullName>Pentatricopeptide repeat-containing protein At5g24830</fullName>
    </recommendedName>
</protein>
<accession>Q8L6Y3</accession>
<accession>Q8GYX7</accession>
<gene>
    <name type="ordered locus">At5g24830</name>
    <name type="ORF">F6A4_40</name>
    <name type="ORF">T4C12.4</name>
</gene>
<dbReference type="EMBL" id="AF069716">
    <property type="status" value="NOT_ANNOTATED_CDS"/>
    <property type="molecule type" value="Genomic_DNA"/>
</dbReference>
<dbReference type="EMBL" id="AL392145">
    <property type="status" value="NOT_ANNOTATED_CDS"/>
    <property type="molecule type" value="Genomic_DNA"/>
</dbReference>
<dbReference type="EMBL" id="CP002688">
    <property type="protein sequence ID" value="AED93367.1"/>
    <property type="molecule type" value="Genomic_DNA"/>
</dbReference>
<dbReference type="EMBL" id="AK117329">
    <property type="protein sequence ID" value="BAC41999.1"/>
    <property type="molecule type" value="mRNA"/>
</dbReference>
<dbReference type="EMBL" id="AY140089">
    <property type="protein sequence ID" value="AAM98230.1"/>
    <property type="molecule type" value="mRNA"/>
</dbReference>
<dbReference type="EMBL" id="BT008362">
    <property type="protein sequence ID" value="AAP37721.1"/>
    <property type="molecule type" value="mRNA"/>
</dbReference>
<dbReference type="RefSeq" id="NP_568460.1">
    <property type="nucleotide sequence ID" value="NM_122392.5"/>
</dbReference>
<dbReference type="SMR" id="Q8L6Y3"/>
<dbReference type="FunCoup" id="Q8L6Y3">
    <property type="interactions" value="92"/>
</dbReference>
<dbReference type="iPTMnet" id="Q8L6Y3"/>
<dbReference type="PaxDb" id="3702-AT5G24830.1"/>
<dbReference type="EnsemblPlants" id="AT5G24830.1">
    <property type="protein sequence ID" value="AT5G24830.1"/>
    <property type="gene ID" value="AT5G24830"/>
</dbReference>
<dbReference type="GeneID" id="832552"/>
<dbReference type="Gramene" id="AT5G24830.1">
    <property type="protein sequence ID" value="AT5G24830.1"/>
    <property type="gene ID" value="AT5G24830"/>
</dbReference>
<dbReference type="KEGG" id="ath:AT5G24830"/>
<dbReference type="Araport" id="AT5G24830"/>
<dbReference type="TAIR" id="AT5G24830"/>
<dbReference type="eggNOG" id="KOG4197">
    <property type="taxonomic scope" value="Eukaryota"/>
</dbReference>
<dbReference type="HOGENOM" id="CLU_002706_49_0_1"/>
<dbReference type="InParanoid" id="Q8L6Y3"/>
<dbReference type="OMA" id="VMSRMGV"/>
<dbReference type="PhylomeDB" id="Q8L6Y3"/>
<dbReference type="PRO" id="PR:Q8L6Y3"/>
<dbReference type="Proteomes" id="UP000006548">
    <property type="component" value="Chromosome 5"/>
</dbReference>
<dbReference type="ExpressionAtlas" id="Q8L6Y3">
    <property type="expression patterns" value="baseline and differential"/>
</dbReference>
<dbReference type="Gene3D" id="1.25.40.10">
    <property type="entry name" value="Tetratricopeptide repeat domain"/>
    <property type="match status" value="4"/>
</dbReference>
<dbReference type="InterPro" id="IPR002885">
    <property type="entry name" value="Pentatricopeptide_rpt"/>
</dbReference>
<dbReference type="InterPro" id="IPR011990">
    <property type="entry name" value="TPR-like_helical_dom_sf"/>
</dbReference>
<dbReference type="NCBIfam" id="TIGR00756">
    <property type="entry name" value="PPR"/>
    <property type="match status" value="8"/>
</dbReference>
<dbReference type="PANTHER" id="PTHR47447">
    <property type="entry name" value="OS03G0856100 PROTEIN"/>
    <property type="match status" value="1"/>
</dbReference>
<dbReference type="PANTHER" id="PTHR47447:SF17">
    <property type="entry name" value="OS12G0638900 PROTEIN"/>
    <property type="match status" value="1"/>
</dbReference>
<dbReference type="Pfam" id="PF01535">
    <property type="entry name" value="PPR"/>
    <property type="match status" value="3"/>
</dbReference>
<dbReference type="Pfam" id="PF12854">
    <property type="entry name" value="PPR_1"/>
    <property type="match status" value="1"/>
</dbReference>
<dbReference type="Pfam" id="PF13041">
    <property type="entry name" value="PPR_2"/>
    <property type="match status" value="4"/>
</dbReference>
<dbReference type="PROSITE" id="PS51375">
    <property type="entry name" value="PPR"/>
    <property type="match status" value="12"/>
</dbReference>
<proteinExistence type="evidence at transcript level"/>
<keyword id="KW-1185">Reference proteome</keyword>
<keyword id="KW-0677">Repeat</keyword>
<organism>
    <name type="scientific">Arabidopsis thaliana</name>
    <name type="common">Mouse-ear cress</name>
    <dbReference type="NCBI Taxonomy" id="3702"/>
    <lineage>
        <taxon>Eukaryota</taxon>
        <taxon>Viridiplantae</taxon>
        <taxon>Streptophyta</taxon>
        <taxon>Embryophyta</taxon>
        <taxon>Tracheophyta</taxon>
        <taxon>Spermatophyta</taxon>
        <taxon>Magnoliopsida</taxon>
        <taxon>eudicotyledons</taxon>
        <taxon>Gunneridae</taxon>
        <taxon>Pentapetalae</taxon>
        <taxon>rosids</taxon>
        <taxon>malvids</taxon>
        <taxon>Brassicales</taxon>
        <taxon>Brassicaceae</taxon>
        <taxon>Camelineae</taxon>
        <taxon>Arabidopsis</taxon>
    </lineage>
</organism>
<reference key="1">
    <citation type="journal article" date="2000" name="Nature">
        <title>Sequence and analysis of chromosome 5 of the plant Arabidopsis thaliana.</title>
        <authorList>
            <person name="Tabata S."/>
            <person name="Kaneko T."/>
            <person name="Nakamura Y."/>
            <person name="Kotani H."/>
            <person name="Kato T."/>
            <person name="Asamizu E."/>
            <person name="Miyajima N."/>
            <person name="Sasamoto S."/>
            <person name="Kimura T."/>
            <person name="Hosouchi T."/>
            <person name="Kawashima K."/>
            <person name="Kohara M."/>
            <person name="Matsumoto M."/>
            <person name="Matsuno A."/>
            <person name="Muraki A."/>
            <person name="Nakayama S."/>
            <person name="Nakazaki N."/>
            <person name="Naruo K."/>
            <person name="Okumura S."/>
            <person name="Shinpo S."/>
            <person name="Takeuchi C."/>
            <person name="Wada T."/>
            <person name="Watanabe A."/>
            <person name="Yamada M."/>
            <person name="Yasuda M."/>
            <person name="Sato S."/>
            <person name="de la Bastide M."/>
            <person name="Huang E."/>
            <person name="Spiegel L."/>
            <person name="Gnoj L."/>
            <person name="O'Shaughnessy A."/>
            <person name="Preston R."/>
            <person name="Habermann K."/>
            <person name="Murray J."/>
            <person name="Johnson D."/>
            <person name="Rohlfing T."/>
            <person name="Nelson J."/>
            <person name="Stoneking T."/>
            <person name="Pepin K."/>
            <person name="Spieth J."/>
            <person name="Sekhon M."/>
            <person name="Armstrong J."/>
            <person name="Becker M."/>
            <person name="Belter E."/>
            <person name="Cordum H."/>
            <person name="Cordes M."/>
            <person name="Courtney L."/>
            <person name="Courtney W."/>
            <person name="Dante M."/>
            <person name="Du H."/>
            <person name="Edwards J."/>
            <person name="Fryman J."/>
            <person name="Haakensen B."/>
            <person name="Lamar E."/>
            <person name="Latreille P."/>
            <person name="Leonard S."/>
            <person name="Meyer R."/>
            <person name="Mulvaney E."/>
            <person name="Ozersky P."/>
            <person name="Riley A."/>
            <person name="Strowmatt C."/>
            <person name="Wagner-McPherson C."/>
            <person name="Wollam A."/>
            <person name="Yoakum M."/>
            <person name="Bell M."/>
            <person name="Dedhia N."/>
            <person name="Parnell L."/>
            <person name="Shah R."/>
            <person name="Rodriguez M."/>
            <person name="Hoon See L."/>
            <person name="Vil D."/>
            <person name="Baker J."/>
            <person name="Kirchoff K."/>
            <person name="Toth K."/>
            <person name="King L."/>
            <person name="Bahret A."/>
            <person name="Miller B."/>
            <person name="Marra M.A."/>
            <person name="Martienssen R."/>
            <person name="McCombie W.R."/>
            <person name="Wilson R.K."/>
            <person name="Murphy G."/>
            <person name="Bancroft I."/>
            <person name="Volckaert G."/>
            <person name="Wambutt R."/>
            <person name="Duesterhoeft A."/>
            <person name="Stiekema W."/>
            <person name="Pohl T."/>
            <person name="Entian K.-D."/>
            <person name="Terryn N."/>
            <person name="Hartley N."/>
            <person name="Bent E."/>
            <person name="Johnson S."/>
            <person name="Langham S.-A."/>
            <person name="McCullagh B."/>
            <person name="Robben J."/>
            <person name="Grymonprez B."/>
            <person name="Zimmermann W."/>
            <person name="Ramsperger U."/>
            <person name="Wedler H."/>
            <person name="Balke K."/>
            <person name="Wedler E."/>
            <person name="Peters S."/>
            <person name="van Staveren M."/>
            <person name="Dirkse W."/>
            <person name="Mooijman P."/>
            <person name="Klein Lankhorst R."/>
            <person name="Weitzenegger T."/>
            <person name="Bothe G."/>
            <person name="Rose M."/>
            <person name="Hauf J."/>
            <person name="Berneiser S."/>
            <person name="Hempel S."/>
            <person name="Feldpausch M."/>
            <person name="Lamberth S."/>
            <person name="Villarroel R."/>
            <person name="Gielen J."/>
            <person name="Ardiles W."/>
            <person name="Bents O."/>
            <person name="Lemcke K."/>
            <person name="Kolesov G."/>
            <person name="Mayer K.F.X."/>
            <person name="Rudd S."/>
            <person name="Schoof H."/>
            <person name="Schueller C."/>
            <person name="Zaccaria P."/>
            <person name="Mewes H.-W."/>
            <person name="Bevan M."/>
            <person name="Fransz P.F."/>
        </authorList>
    </citation>
    <scope>NUCLEOTIDE SEQUENCE [LARGE SCALE GENOMIC DNA]</scope>
    <source>
        <strain>cv. Columbia</strain>
    </source>
</reference>
<reference key="2">
    <citation type="journal article" date="2017" name="Plant J.">
        <title>Araport11: a complete reannotation of the Arabidopsis thaliana reference genome.</title>
        <authorList>
            <person name="Cheng C.Y."/>
            <person name="Krishnakumar V."/>
            <person name="Chan A.P."/>
            <person name="Thibaud-Nissen F."/>
            <person name="Schobel S."/>
            <person name="Town C.D."/>
        </authorList>
    </citation>
    <scope>GENOME REANNOTATION</scope>
    <source>
        <strain>cv. Columbia</strain>
    </source>
</reference>
<reference key="3">
    <citation type="journal article" date="2002" name="Science">
        <title>Functional annotation of a full-length Arabidopsis cDNA collection.</title>
        <authorList>
            <person name="Seki M."/>
            <person name="Narusaka M."/>
            <person name="Kamiya A."/>
            <person name="Ishida J."/>
            <person name="Satou M."/>
            <person name="Sakurai T."/>
            <person name="Nakajima M."/>
            <person name="Enju A."/>
            <person name="Akiyama K."/>
            <person name="Oono Y."/>
            <person name="Muramatsu M."/>
            <person name="Hayashizaki Y."/>
            <person name="Kawai J."/>
            <person name="Carninci P."/>
            <person name="Itoh M."/>
            <person name="Ishii Y."/>
            <person name="Arakawa T."/>
            <person name="Shibata K."/>
            <person name="Shinagawa A."/>
            <person name="Shinozaki K."/>
        </authorList>
    </citation>
    <scope>NUCLEOTIDE SEQUENCE [LARGE SCALE MRNA]</scope>
    <source>
        <strain>cv. Columbia</strain>
    </source>
</reference>
<reference key="4">
    <citation type="journal article" date="2003" name="Science">
        <title>Empirical analysis of transcriptional activity in the Arabidopsis genome.</title>
        <authorList>
            <person name="Yamada K."/>
            <person name="Lim J."/>
            <person name="Dale J.M."/>
            <person name="Chen H."/>
            <person name="Shinn P."/>
            <person name="Palm C.J."/>
            <person name="Southwick A.M."/>
            <person name="Wu H.C."/>
            <person name="Kim C.J."/>
            <person name="Nguyen M."/>
            <person name="Pham P.K."/>
            <person name="Cheuk R.F."/>
            <person name="Karlin-Newmann G."/>
            <person name="Liu S.X."/>
            <person name="Lam B."/>
            <person name="Sakano H."/>
            <person name="Wu T."/>
            <person name="Yu G."/>
            <person name="Miranda M."/>
            <person name="Quach H.L."/>
            <person name="Tripp M."/>
            <person name="Chang C.H."/>
            <person name="Lee J.M."/>
            <person name="Toriumi M.J."/>
            <person name="Chan M.M."/>
            <person name="Tang C.C."/>
            <person name="Onodera C.S."/>
            <person name="Deng J.M."/>
            <person name="Akiyama K."/>
            <person name="Ansari Y."/>
            <person name="Arakawa T."/>
            <person name="Banh J."/>
            <person name="Banno F."/>
            <person name="Bowser L."/>
            <person name="Brooks S.Y."/>
            <person name="Carninci P."/>
            <person name="Chao Q."/>
            <person name="Choy N."/>
            <person name="Enju A."/>
            <person name="Goldsmith A.D."/>
            <person name="Gurjal M."/>
            <person name="Hansen N.F."/>
            <person name="Hayashizaki Y."/>
            <person name="Johnson-Hopson C."/>
            <person name="Hsuan V.W."/>
            <person name="Iida K."/>
            <person name="Karnes M."/>
            <person name="Khan S."/>
            <person name="Koesema E."/>
            <person name="Ishida J."/>
            <person name="Jiang P.X."/>
            <person name="Jones T."/>
            <person name="Kawai J."/>
            <person name="Kamiya A."/>
            <person name="Meyers C."/>
            <person name="Nakajima M."/>
            <person name="Narusaka M."/>
            <person name="Seki M."/>
            <person name="Sakurai T."/>
            <person name="Satou M."/>
            <person name="Tamse R."/>
            <person name="Vaysberg M."/>
            <person name="Wallender E.K."/>
            <person name="Wong C."/>
            <person name="Yamamura Y."/>
            <person name="Yuan S."/>
            <person name="Shinozaki K."/>
            <person name="Davis R.W."/>
            <person name="Theologis A."/>
            <person name="Ecker J.R."/>
        </authorList>
    </citation>
    <scope>NUCLEOTIDE SEQUENCE [LARGE SCALE MRNA]</scope>
    <source>
        <strain>cv. Columbia</strain>
    </source>
</reference>
<reference key="5">
    <citation type="journal article" date="2004" name="Plant Cell">
        <title>Genome-wide analysis of Arabidopsis pentatricopeptide repeat proteins reveals their essential role in organelle biogenesis.</title>
        <authorList>
            <person name="Lurin C."/>
            <person name="Andres C."/>
            <person name="Aubourg S."/>
            <person name="Bellaoui M."/>
            <person name="Bitton F."/>
            <person name="Bruyere C."/>
            <person name="Caboche M."/>
            <person name="Debast C."/>
            <person name="Gualberto J."/>
            <person name="Hoffmann B."/>
            <person name="Lecharny A."/>
            <person name="Le Ret M."/>
            <person name="Martin-Magniette M.-L."/>
            <person name="Mireau H."/>
            <person name="Peeters N."/>
            <person name="Renou J.-P."/>
            <person name="Szurek B."/>
            <person name="Taconnat L."/>
            <person name="Small I."/>
        </authorList>
    </citation>
    <scope>GENE FAMILY</scope>
</reference>